<accession>Q46639</accession>
<comment type="function">
    <text>Involved in the biosynthesis of amylovoran which functions as a virulence factor.</text>
</comment>
<comment type="pathway">
    <text>Glycan metabolism; exopolysaccharide biosynthesis.</text>
</comment>
<comment type="subcellular location">
    <subcellularLocation>
        <location>Cell membrane</location>
        <topology>Multi-pass membrane protein</topology>
    </subcellularLocation>
</comment>
<comment type="similarity">
    <text evidence="2">Belongs to the polysaccharide synthase family.</text>
</comment>
<dbReference type="EMBL" id="X77921">
    <property type="protein sequence ID" value="CAA54890.2"/>
    <property type="molecule type" value="Genomic_DNA"/>
</dbReference>
<dbReference type="PIR" id="S61902">
    <property type="entry name" value="S52149"/>
</dbReference>
<dbReference type="SMR" id="Q46639"/>
<dbReference type="UniPathway" id="UPA00631"/>
<dbReference type="GO" id="GO:0005886">
    <property type="term" value="C:plasma membrane"/>
    <property type="evidence" value="ECO:0007669"/>
    <property type="project" value="UniProtKB-SubCell"/>
</dbReference>
<dbReference type="GO" id="GO:0000271">
    <property type="term" value="P:polysaccharide biosynthetic process"/>
    <property type="evidence" value="ECO:0007669"/>
    <property type="project" value="UniProtKB-KW"/>
</dbReference>
<dbReference type="InterPro" id="IPR050833">
    <property type="entry name" value="Poly_Biosynth_Transport"/>
</dbReference>
<dbReference type="PANTHER" id="PTHR30250:SF10">
    <property type="entry name" value="LIPOPOLYSACCHARIDE BIOSYNTHESIS PROTEIN WZXC"/>
    <property type="match status" value="1"/>
</dbReference>
<dbReference type="PANTHER" id="PTHR30250">
    <property type="entry name" value="PST FAMILY PREDICTED COLANIC ACID TRANSPORTER"/>
    <property type="match status" value="1"/>
</dbReference>
<dbReference type="Pfam" id="PF13440">
    <property type="entry name" value="Polysacc_synt_3"/>
    <property type="match status" value="1"/>
</dbReference>
<evidence type="ECO:0000255" key="1"/>
<evidence type="ECO:0000305" key="2"/>
<reference key="1">
    <citation type="journal article" date="1995" name="Mol. Microbiol.">
        <title>Molecular analysis of the ams operon required for exopolysaccharide synthesis of Erwinia amylovora.</title>
        <authorList>
            <person name="Bugert P."/>
            <person name="Geider K."/>
        </authorList>
    </citation>
    <scope>NUCLEOTIDE SEQUENCE [GENOMIC DNA]</scope>
</reference>
<reference key="2">
    <citation type="submission" date="2011-08" db="EMBL/GenBank/DDBJ databases">
        <authorList>
            <person name="Geider K.K."/>
        </authorList>
    </citation>
    <scope>SEQUENCE REVISION TO 320</scope>
</reference>
<feature type="chain" id="PRO_0000166444" description="Amylovoran biosynthesis protein AmsL">
    <location>
        <begin position="1"/>
        <end position="388"/>
    </location>
</feature>
<feature type="transmembrane region" description="Helical" evidence="1">
    <location>
        <begin position="24"/>
        <end position="44"/>
    </location>
</feature>
<feature type="transmembrane region" description="Helical" evidence="1">
    <location>
        <begin position="47"/>
        <end position="67"/>
    </location>
</feature>
<feature type="transmembrane region" description="Helical" evidence="1">
    <location>
        <begin position="97"/>
        <end position="117"/>
    </location>
</feature>
<feature type="transmembrane region" description="Helical" evidence="1">
    <location>
        <begin position="231"/>
        <end position="251"/>
    </location>
</feature>
<feature type="transmembrane region" description="Helical" evidence="1">
    <location>
        <begin position="297"/>
        <end position="317"/>
    </location>
</feature>
<feature type="transmembrane region" description="Helical" evidence="1">
    <location>
        <begin position="359"/>
        <end position="379"/>
    </location>
</feature>
<protein>
    <recommendedName>
        <fullName>Amylovoran biosynthesis protein AmsL</fullName>
    </recommendedName>
</protein>
<name>AMSL_ERWAM</name>
<gene>
    <name type="primary">amsL</name>
</gene>
<organism>
    <name type="scientific">Erwinia amylovora</name>
    <name type="common">Fire blight bacteria</name>
    <dbReference type="NCBI Taxonomy" id="552"/>
    <lineage>
        <taxon>Bacteria</taxon>
        <taxon>Pseudomonadati</taxon>
        <taxon>Pseudomonadota</taxon>
        <taxon>Gammaproteobacteria</taxon>
        <taxon>Enterobacterales</taxon>
        <taxon>Erwiniaceae</taxon>
        <taxon>Erwinia</taxon>
    </lineage>
</organism>
<keyword id="KW-1003">Cell membrane</keyword>
<keyword id="KW-0270">Exopolysaccharide synthesis</keyword>
<keyword id="KW-0472">Membrane</keyword>
<keyword id="KW-0812">Transmembrane</keyword>
<keyword id="KW-1133">Transmembrane helix</keyword>
<keyword id="KW-0843">Virulence</keyword>
<sequence>MSSYIVHRQNITRKEQSTIYWVNVLLSMLTGLLLVAIAWPISWFYHLPQLGGLIMLTSLNFLVLGSLSQYQAHFIKAKRMILLAKIEMVTKFLAFAFTVILLYYSPLGVSAVILGLFANAALRIGCMIWFGDKSWRPTFEFDQGTFYSSLKYGIYQLGSQTINQLRTQADSLIVGKVMGAELLGVYSLAKELILQPLKLVTPVINRLALPRFAEKQHDPVRLQQLFLKGTFVIMLFSAIMYLAIGILSPVIVRVLYGPAHEAVGQLIPLMLLFGMLRPMGGLTGAISQANGRTNVEFYWNVVASIIVVLVLASVWIWPQVEYVALTLSISQVLISVFAHPFFIKPVIGIRFLPYARQWISVSAVFVGIIALVSHYNLFIMPEWFSRWL</sequence>
<proteinExistence type="inferred from homology"/>